<gene>
    <name evidence="1" type="primary">cysA</name>
    <name type="ordered locus">PA0280</name>
</gene>
<protein>
    <recommendedName>
        <fullName evidence="1">Sulfate/thiosulfate import ATP-binding protein CysA</fullName>
        <ecNumber evidence="1">7.3.2.3</ecNumber>
    </recommendedName>
    <alternativeName>
        <fullName evidence="1">Sulfate-transporting ATPase</fullName>
    </alternativeName>
</protein>
<accession>Q9I6L0</accession>
<name>CYSA_PSEAE</name>
<reference key="1">
    <citation type="journal article" date="2000" name="Nature">
        <title>Complete genome sequence of Pseudomonas aeruginosa PAO1, an opportunistic pathogen.</title>
        <authorList>
            <person name="Stover C.K."/>
            <person name="Pham X.-Q.T."/>
            <person name="Erwin A.L."/>
            <person name="Mizoguchi S.D."/>
            <person name="Warrener P."/>
            <person name="Hickey M.J."/>
            <person name="Brinkman F.S.L."/>
            <person name="Hufnagle W.O."/>
            <person name="Kowalik D.J."/>
            <person name="Lagrou M."/>
            <person name="Garber R.L."/>
            <person name="Goltry L."/>
            <person name="Tolentino E."/>
            <person name="Westbrock-Wadman S."/>
            <person name="Yuan Y."/>
            <person name="Brody L.L."/>
            <person name="Coulter S.N."/>
            <person name="Folger K.R."/>
            <person name="Kas A."/>
            <person name="Larbig K."/>
            <person name="Lim R.M."/>
            <person name="Smith K.A."/>
            <person name="Spencer D.H."/>
            <person name="Wong G.K.-S."/>
            <person name="Wu Z."/>
            <person name="Paulsen I.T."/>
            <person name="Reizer J."/>
            <person name="Saier M.H. Jr."/>
            <person name="Hancock R.E.W."/>
            <person name="Lory S."/>
            <person name="Olson M.V."/>
        </authorList>
    </citation>
    <scope>NUCLEOTIDE SEQUENCE [LARGE SCALE GENOMIC DNA]</scope>
    <source>
        <strain>ATCC 15692 / DSM 22644 / CIP 104116 / JCM 14847 / LMG 12228 / 1C / PRS 101 / PAO1</strain>
    </source>
</reference>
<sequence>MSIEIRNVSKNFNAFKALDDINLDIQSGELVALLGPSGCGKTTLLRIIAGLETPDAGNIVFHGEDVSQHDVRDRNVGFVFQHYALFRHMTVFDNVAFGLRMKPKGERPGESAIKAKVHELLNMVQLDWLADRYPEQLSGGQRQRIALARALAVEPKILLLDEPFGALDAKVRKELRRWLARLHEEINLTSVFVTHDQEEAMEVADRIVVMNKGVIEQIGSPGEVYENPASDFVYHFLGDSNRLQLGNDQHLLFRPHEVSLSRSAVAEHRAAEVRDIRPLGAITRVTLKVDGQDELIEAEVVKDHDSLAGLARGETLYFKPKAFQPVANL</sequence>
<proteinExistence type="inferred from homology"/>
<keyword id="KW-0067">ATP-binding</keyword>
<keyword id="KW-0997">Cell inner membrane</keyword>
<keyword id="KW-1003">Cell membrane</keyword>
<keyword id="KW-0472">Membrane</keyword>
<keyword id="KW-0547">Nucleotide-binding</keyword>
<keyword id="KW-1185">Reference proteome</keyword>
<keyword id="KW-0764">Sulfate transport</keyword>
<keyword id="KW-1278">Translocase</keyword>
<keyword id="KW-0813">Transport</keyword>
<feature type="chain" id="PRO_0000092282" description="Sulfate/thiosulfate import ATP-binding protein CysA">
    <location>
        <begin position="1"/>
        <end position="329"/>
    </location>
</feature>
<feature type="domain" description="ABC transporter" evidence="1">
    <location>
        <begin position="3"/>
        <end position="237"/>
    </location>
</feature>
<feature type="binding site" evidence="1">
    <location>
        <begin position="35"/>
        <end position="42"/>
    </location>
    <ligand>
        <name>ATP</name>
        <dbReference type="ChEBI" id="CHEBI:30616"/>
    </ligand>
</feature>
<organism>
    <name type="scientific">Pseudomonas aeruginosa (strain ATCC 15692 / DSM 22644 / CIP 104116 / JCM 14847 / LMG 12228 / 1C / PRS 101 / PAO1)</name>
    <dbReference type="NCBI Taxonomy" id="208964"/>
    <lineage>
        <taxon>Bacteria</taxon>
        <taxon>Pseudomonadati</taxon>
        <taxon>Pseudomonadota</taxon>
        <taxon>Gammaproteobacteria</taxon>
        <taxon>Pseudomonadales</taxon>
        <taxon>Pseudomonadaceae</taxon>
        <taxon>Pseudomonas</taxon>
    </lineage>
</organism>
<dbReference type="EC" id="7.3.2.3" evidence="1"/>
<dbReference type="EMBL" id="AE004091">
    <property type="protein sequence ID" value="AAG03669.1"/>
    <property type="molecule type" value="Genomic_DNA"/>
</dbReference>
<dbReference type="PIR" id="H83609">
    <property type="entry name" value="H83609"/>
</dbReference>
<dbReference type="RefSeq" id="NP_248971.1">
    <property type="nucleotide sequence ID" value="NC_002516.2"/>
</dbReference>
<dbReference type="RefSeq" id="WP_003084237.1">
    <property type="nucleotide sequence ID" value="NZ_QZGE01000035.1"/>
</dbReference>
<dbReference type="SMR" id="Q9I6L0"/>
<dbReference type="FunCoup" id="Q9I6L0">
    <property type="interactions" value="301"/>
</dbReference>
<dbReference type="STRING" id="208964.PA0280"/>
<dbReference type="PaxDb" id="208964-PA0280"/>
<dbReference type="GeneID" id="877644"/>
<dbReference type="KEGG" id="pae:PA0280"/>
<dbReference type="PATRIC" id="fig|208964.12.peg.293"/>
<dbReference type="PseudoCAP" id="PA0280"/>
<dbReference type="HOGENOM" id="CLU_000604_1_1_6"/>
<dbReference type="InParanoid" id="Q9I6L0"/>
<dbReference type="OrthoDB" id="9802264at2"/>
<dbReference type="PhylomeDB" id="Q9I6L0"/>
<dbReference type="BioCyc" id="PAER208964:G1FZ6-282-MONOMER"/>
<dbReference type="Proteomes" id="UP000002438">
    <property type="component" value="Chromosome"/>
</dbReference>
<dbReference type="GO" id="GO:0043190">
    <property type="term" value="C:ATP-binding cassette (ABC) transporter complex"/>
    <property type="evidence" value="ECO:0007669"/>
    <property type="project" value="InterPro"/>
</dbReference>
<dbReference type="GO" id="GO:0015419">
    <property type="term" value="F:ABC-type sulfate transporter activity"/>
    <property type="evidence" value="ECO:0007669"/>
    <property type="project" value="InterPro"/>
</dbReference>
<dbReference type="GO" id="GO:0102025">
    <property type="term" value="F:ABC-type thiosulfate transporter activity"/>
    <property type="evidence" value="ECO:0007669"/>
    <property type="project" value="RHEA"/>
</dbReference>
<dbReference type="GO" id="GO:0005524">
    <property type="term" value="F:ATP binding"/>
    <property type="evidence" value="ECO:0007669"/>
    <property type="project" value="UniProtKB-KW"/>
</dbReference>
<dbReference type="GO" id="GO:0016887">
    <property type="term" value="F:ATP hydrolysis activity"/>
    <property type="evidence" value="ECO:0007669"/>
    <property type="project" value="InterPro"/>
</dbReference>
<dbReference type="GO" id="GO:1902358">
    <property type="term" value="P:sulfate transmembrane transport"/>
    <property type="evidence" value="ECO:0000318"/>
    <property type="project" value="GO_Central"/>
</dbReference>
<dbReference type="CDD" id="cd03296">
    <property type="entry name" value="ABC_CysA_sulfate_importer"/>
    <property type="match status" value="1"/>
</dbReference>
<dbReference type="FunFam" id="3.40.50.300:FF:000227">
    <property type="entry name" value="Sulfate/thiosulfate import ATP-binding protein CysA"/>
    <property type="match status" value="1"/>
</dbReference>
<dbReference type="Gene3D" id="3.40.50.300">
    <property type="entry name" value="P-loop containing nucleotide triphosphate hydrolases"/>
    <property type="match status" value="1"/>
</dbReference>
<dbReference type="InterPro" id="IPR003593">
    <property type="entry name" value="AAA+_ATPase"/>
</dbReference>
<dbReference type="InterPro" id="IPR050093">
    <property type="entry name" value="ABC_SmlMolc_Importer"/>
</dbReference>
<dbReference type="InterPro" id="IPR003439">
    <property type="entry name" value="ABC_transporter-like_ATP-bd"/>
</dbReference>
<dbReference type="InterPro" id="IPR017871">
    <property type="entry name" value="ABC_transporter-like_CS"/>
</dbReference>
<dbReference type="InterPro" id="IPR008995">
    <property type="entry name" value="Mo/tungstate-bd_C_term_dom"/>
</dbReference>
<dbReference type="InterPro" id="IPR027417">
    <property type="entry name" value="P-loop_NTPase"/>
</dbReference>
<dbReference type="InterPro" id="IPR005666">
    <property type="entry name" value="Sulph_transpt1"/>
</dbReference>
<dbReference type="InterPro" id="IPR024765">
    <property type="entry name" value="TOBE-like"/>
</dbReference>
<dbReference type="NCBIfam" id="TIGR00968">
    <property type="entry name" value="3a0106s01"/>
    <property type="match status" value="1"/>
</dbReference>
<dbReference type="PANTHER" id="PTHR42781">
    <property type="entry name" value="SPERMIDINE/PUTRESCINE IMPORT ATP-BINDING PROTEIN POTA"/>
    <property type="match status" value="1"/>
</dbReference>
<dbReference type="PANTHER" id="PTHR42781:SF4">
    <property type="entry name" value="SPERMIDINE_PUTRESCINE IMPORT ATP-BINDING PROTEIN POTA"/>
    <property type="match status" value="1"/>
</dbReference>
<dbReference type="Pfam" id="PF00005">
    <property type="entry name" value="ABC_tran"/>
    <property type="match status" value="1"/>
</dbReference>
<dbReference type="Pfam" id="PF12857">
    <property type="entry name" value="TOBE_3"/>
    <property type="match status" value="1"/>
</dbReference>
<dbReference type="SMART" id="SM00382">
    <property type="entry name" value="AAA"/>
    <property type="match status" value="1"/>
</dbReference>
<dbReference type="SUPFAM" id="SSF50331">
    <property type="entry name" value="MOP-like"/>
    <property type="match status" value="1"/>
</dbReference>
<dbReference type="SUPFAM" id="SSF52540">
    <property type="entry name" value="P-loop containing nucleoside triphosphate hydrolases"/>
    <property type="match status" value="1"/>
</dbReference>
<dbReference type="PROSITE" id="PS00211">
    <property type="entry name" value="ABC_TRANSPORTER_1"/>
    <property type="match status" value="1"/>
</dbReference>
<dbReference type="PROSITE" id="PS50893">
    <property type="entry name" value="ABC_TRANSPORTER_2"/>
    <property type="match status" value="1"/>
</dbReference>
<dbReference type="PROSITE" id="PS51237">
    <property type="entry name" value="CYSA"/>
    <property type="match status" value="1"/>
</dbReference>
<evidence type="ECO:0000255" key="1">
    <source>
        <dbReference type="HAMAP-Rule" id="MF_01701"/>
    </source>
</evidence>
<comment type="function">
    <text evidence="1">Part of the ABC transporter complex CysAWTP involved in sulfate/thiosulfate import. Responsible for energy coupling to the transport system.</text>
</comment>
<comment type="catalytic activity">
    <reaction evidence="1">
        <text>sulfate(out) + ATP + H2O = sulfate(in) + ADP + phosphate + H(+)</text>
        <dbReference type="Rhea" id="RHEA:10192"/>
        <dbReference type="ChEBI" id="CHEBI:15377"/>
        <dbReference type="ChEBI" id="CHEBI:15378"/>
        <dbReference type="ChEBI" id="CHEBI:16189"/>
        <dbReference type="ChEBI" id="CHEBI:30616"/>
        <dbReference type="ChEBI" id="CHEBI:43474"/>
        <dbReference type="ChEBI" id="CHEBI:456216"/>
        <dbReference type="EC" id="7.3.2.3"/>
    </reaction>
</comment>
<comment type="catalytic activity">
    <reaction evidence="1">
        <text>thiosulfate(out) + ATP + H2O = thiosulfate(in) + ADP + phosphate + H(+)</text>
        <dbReference type="Rhea" id="RHEA:29871"/>
        <dbReference type="ChEBI" id="CHEBI:15377"/>
        <dbReference type="ChEBI" id="CHEBI:15378"/>
        <dbReference type="ChEBI" id="CHEBI:30616"/>
        <dbReference type="ChEBI" id="CHEBI:33542"/>
        <dbReference type="ChEBI" id="CHEBI:43474"/>
        <dbReference type="ChEBI" id="CHEBI:456216"/>
        <dbReference type="EC" id="7.3.2.3"/>
    </reaction>
</comment>
<comment type="subunit">
    <text evidence="1">The complex is composed of two ATP-binding proteins (CysA), two transmembrane proteins (CysT and CysW) and a solute-binding protein (CysP).</text>
</comment>
<comment type="subcellular location">
    <subcellularLocation>
        <location evidence="1">Cell inner membrane</location>
        <topology evidence="1">Peripheral membrane protein</topology>
    </subcellularLocation>
</comment>
<comment type="similarity">
    <text evidence="1">Belongs to the ABC transporter superfamily. Sulfate/tungstate importer (TC 3.A.1.6) family.</text>
</comment>